<reference key="1">
    <citation type="journal article" date="1994" name="Mol. Microbiol.">
        <title>Nod factors of Rhizobium are a key to the legume door.</title>
        <authorList>
            <person name="Relic B."/>
            <person name="Perret X."/>
            <person name="Estrada-Garcia M.T."/>
            <person name="Kopcinska J."/>
            <person name="Golinowski W."/>
            <person name="Krishnan H.B."/>
            <person name="Pueppke S.G."/>
            <person name="Broughton W.J."/>
        </authorList>
    </citation>
    <scope>NUCLEOTIDE SEQUENCE [GENOMIC DNA]</scope>
</reference>
<reference key="2">
    <citation type="journal article" date="1997" name="Nature">
        <title>Molecular basis of symbiosis between Rhizobium and legumes.</title>
        <authorList>
            <person name="Freiberg C.A."/>
            <person name="Fellay R."/>
            <person name="Bairoch A."/>
            <person name="Broughton W.J."/>
            <person name="Rosenthal A."/>
            <person name="Perret X."/>
        </authorList>
    </citation>
    <scope>NUCLEOTIDE SEQUENCE [LARGE SCALE GENOMIC DNA]</scope>
    <source>
        <strain>NBRC 101917 / NGR234</strain>
    </source>
</reference>
<reference key="3">
    <citation type="journal article" date="2009" name="Appl. Environ. Microbiol.">
        <title>Rhizobium sp. strain NGR234 possesses a remarkable number of secretion systems.</title>
        <authorList>
            <person name="Schmeisser C."/>
            <person name="Liesegang H."/>
            <person name="Krysciak D."/>
            <person name="Bakkou N."/>
            <person name="Le Quere A."/>
            <person name="Wollherr A."/>
            <person name="Heinemeyer I."/>
            <person name="Morgenstern B."/>
            <person name="Pommerening-Roeser A."/>
            <person name="Flores M."/>
            <person name="Palacios R."/>
            <person name="Brenner S."/>
            <person name="Gottschalk G."/>
            <person name="Schmitz R.A."/>
            <person name="Broughton W.J."/>
            <person name="Perret X."/>
            <person name="Strittmatter A.W."/>
            <person name="Streit W.R."/>
        </authorList>
    </citation>
    <scope>NUCLEOTIDE SEQUENCE [LARGE SCALE GENOMIC DNA]</scope>
    <source>
        <strain>NBRC 101917 / NGR234</strain>
    </source>
</reference>
<geneLocation type="plasmid">
    <name>sym pNGR234a</name>
</geneLocation>
<protein>
    <recommendedName>
        <fullName>Nodulation protein A</fullName>
        <ecNumber>2.3.1.-</ecNumber>
    </recommendedName>
</protein>
<proteinExistence type="inferred from homology"/>
<organism>
    <name type="scientific">Sinorhizobium fredii (strain NBRC 101917 / NGR234)</name>
    <dbReference type="NCBI Taxonomy" id="394"/>
    <lineage>
        <taxon>Bacteria</taxon>
        <taxon>Pseudomonadati</taxon>
        <taxon>Pseudomonadota</taxon>
        <taxon>Alphaproteobacteria</taxon>
        <taxon>Hyphomicrobiales</taxon>
        <taxon>Rhizobiaceae</taxon>
        <taxon>Sinorhizobium/Ensifer group</taxon>
        <taxon>Sinorhizobium</taxon>
    </lineage>
</organism>
<comment type="function">
    <text>N-acyltransferase required for nodulation. Acts in the production of a small, heat-stable compound (Nod) that stimulates mitosis in various plant protoplasts.</text>
</comment>
<comment type="subcellular location">
    <subcellularLocation>
        <location>Cytoplasm</location>
    </subcellularLocation>
</comment>
<comment type="similarity">
    <text evidence="1">Belongs to the NodA family.</text>
</comment>
<feature type="chain" id="PRO_0000196344" description="Nodulation protein A">
    <location>
        <begin position="1"/>
        <end position="196"/>
    </location>
</feature>
<accession>P50349</accession>
<keyword id="KW-0012">Acyltransferase</keyword>
<keyword id="KW-0963">Cytoplasm</keyword>
<keyword id="KW-0536">Nodulation</keyword>
<keyword id="KW-0614">Plasmid</keyword>
<keyword id="KW-1185">Reference proteome</keyword>
<keyword id="KW-0808">Transferase</keyword>
<dbReference type="EC" id="2.3.1.-"/>
<dbReference type="EMBL" id="X73362">
    <property type="protein sequence ID" value="CAA51772.1"/>
    <property type="molecule type" value="Genomic_DNA"/>
</dbReference>
<dbReference type="EMBL" id="U00090">
    <property type="protein sequence ID" value="AAB91697.1"/>
    <property type="molecule type" value="Genomic_DNA"/>
</dbReference>
<dbReference type="PIR" id="S34303">
    <property type="entry name" value="S34303"/>
</dbReference>
<dbReference type="RefSeq" id="NP_443885.1">
    <property type="nucleotide sequence ID" value="NC_000914.2"/>
</dbReference>
<dbReference type="RefSeq" id="WP_010875355.1">
    <property type="nucleotide sequence ID" value="NC_000914.2"/>
</dbReference>
<dbReference type="SMR" id="P50349"/>
<dbReference type="KEGG" id="rhi:NGR_a03410"/>
<dbReference type="PATRIC" id="fig|394.7.peg.350"/>
<dbReference type="eggNOG" id="COG3153">
    <property type="taxonomic scope" value="Bacteria"/>
</dbReference>
<dbReference type="HOGENOM" id="CLU_098284_0_0_5"/>
<dbReference type="OrthoDB" id="3573574at2"/>
<dbReference type="Proteomes" id="UP000001054">
    <property type="component" value="Plasmid pNGR234a"/>
</dbReference>
<dbReference type="GO" id="GO:0005829">
    <property type="term" value="C:cytosol"/>
    <property type="evidence" value="ECO:0007669"/>
    <property type="project" value="InterPro"/>
</dbReference>
<dbReference type="GO" id="GO:0016746">
    <property type="term" value="F:acyltransferase activity"/>
    <property type="evidence" value="ECO:0007669"/>
    <property type="project" value="UniProtKB-UniRule"/>
</dbReference>
<dbReference type="Gene3D" id="3.40.630.30">
    <property type="match status" value="1"/>
</dbReference>
<dbReference type="HAMAP" id="MF_00084">
    <property type="entry name" value="NodA"/>
    <property type="match status" value="1"/>
</dbReference>
<dbReference type="InterPro" id="IPR003484">
    <property type="entry name" value="NodA"/>
</dbReference>
<dbReference type="InterPro" id="IPR020567">
    <property type="entry name" value="Nodulation_prot_NodA_CS"/>
</dbReference>
<dbReference type="NCBIfam" id="TIGR04245">
    <property type="entry name" value="nodulat_NodA"/>
    <property type="match status" value="1"/>
</dbReference>
<dbReference type="NCBIfam" id="NF001974">
    <property type="entry name" value="PRK00756.1"/>
    <property type="match status" value="1"/>
</dbReference>
<dbReference type="Pfam" id="PF02474">
    <property type="entry name" value="NodA"/>
    <property type="match status" value="1"/>
</dbReference>
<dbReference type="PROSITE" id="PS01349">
    <property type="entry name" value="NODA"/>
    <property type="match status" value="1"/>
</dbReference>
<evidence type="ECO:0000305" key="1"/>
<sequence>MRPQMRWKLCWENELELSDHTELAEFFRKTYGPTGTFNARPFEGGHSWAGARPELRVIGYDAHGVAAHMGLLRRFIRVGDADLLVAELGLWGVRPDLEGLGLNHSIRVMYPVLQQLGVPFAFGAVRHALYKLVGRLCRNGLGTIVAGVRVRSTLSDVYLNLPPTRTEDVLVVVFPIGRPMSEWPSGTLIERNGPEL</sequence>
<gene>
    <name type="primary">nodA</name>
    <name type="ordered locus">NGR_a03410</name>
    <name type="ORF">y4hI</name>
</gene>
<name>NODA_SINFN</name>